<feature type="chain" id="PRO_0000260563" description="Ribosomal RNA large subunit methyltransferase H">
    <location>
        <begin position="1"/>
        <end position="159"/>
    </location>
</feature>
<feature type="binding site" evidence="1">
    <location>
        <position position="76"/>
    </location>
    <ligand>
        <name>S-adenosyl-L-methionine</name>
        <dbReference type="ChEBI" id="CHEBI:59789"/>
    </ligand>
</feature>
<feature type="binding site" evidence="1">
    <location>
        <position position="108"/>
    </location>
    <ligand>
        <name>S-adenosyl-L-methionine</name>
        <dbReference type="ChEBI" id="CHEBI:59789"/>
    </ligand>
</feature>
<feature type="binding site" evidence="1">
    <location>
        <begin position="127"/>
        <end position="132"/>
    </location>
    <ligand>
        <name>S-adenosyl-L-methionine</name>
        <dbReference type="ChEBI" id="CHEBI:59789"/>
    </ligand>
</feature>
<name>RLMH_LACDA</name>
<organism>
    <name type="scientific">Lactobacillus delbrueckii subsp. bulgaricus (strain ATCC 11842 / DSM 20081 / BCRC 10696 / JCM 1002 / NBRC 13953 / NCIMB 11778 / NCTC 12712 / WDCM 00102 / Lb 14)</name>
    <dbReference type="NCBI Taxonomy" id="390333"/>
    <lineage>
        <taxon>Bacteria</taxon>
        <taxon>Bacillati</taxon>
        <taxon>Bacillota</taxon>
        <taxon>Bacilli</taxon>
        <taxon>Lactobacillales</taxon>
        <taxon>Lactobacillaceae</taxon>
        <taxon>Lactobacillus</taxon>
    </lineage>
</organism>
<gene>
    <name evidence="1" type="primary">rlmH</name>
    <name type="ordered locus">Ldb0141</name>
</gene>
<comment type="function">
    <text evidence="1">Specifically methylates the pseudouridine at position 1915 (m3Psi1915) in 23S rRNA.</text>
</comment>
<comment type="catalytic activity">
    <reaction evidence="1">
        <text>pseudouridine(1915) in 23S rRNA + S-adenosyl-L-methionine = N(3)-methylpseudouridine(1915) in 23S rRNA + S-adenosyl-L-homocysteine + H(+)</text>
        <dbReference type="Rhea" id="RHEA:42752"/>
        <dbReference type="Rhea" id="RHEA-COMP:10221"/>
        <dbReference type="Rhea" id="RHEA-COMP:10222"/>
        <dbReference type="ChEBI" id="CHEBI:15378"/>
        <dbReference type="ChEBI" id="CHEBI:57856"/>
        <dbReference type="ChEBI" id="CHEBI:59789"/>
        <dbReference type="ChEBI" id="CHEBI:65314"/>
        <dbReference type="ChEBI" id="CHEBI:74486"/>
        <dbReference type="EC" id="2.1.1.177"/>
    </reaction>
</comment>
<comment type="subunit">
    <text evidence="1">Homodimer.</text>
</comment>
<comment type="subcellular location">
    <subcellularLocation>
        <location evidence="1">Cytoplasm</location>
    </subcellularLocation>
</comment>
<comment type="similarity">
    <text evidence="1">Belongs to the RNA methyltransferase RlmH family.</text>
</comment>
<evidence type="ECO:0000255" key="1">
    <source>
        <dbReference type="HAMAP-Rule" id="MF_00658"/>
    </source>
</evidence>
<sequence length="159" mass="18118">MNIKIVCVGKLKEKYFKDGIAEYQKRLSRFAKVEIVQVPDEKAPESLSPAQMEEVKKREGERILSKIKDKEYVYVLAIKGKERASEEFAKELKNLGTYGHSDITFVIGGSLGTSDAVNKRANDLFSFGKLTMPHQLMRLVLIEQIYRAFMINSGSPYHK</sequence>
<dbReference type="EC" id="2.1.1.177" evidence="1"/>
<dbReference type="EMBL" id="CR954253">
    <property type="protein sequence ID" value="CAI96981.1"/>
    <property type="molecule type" value="Genomic_DNA"/>
</dbReference>
<dbReference type="RefSeq" id="WP_003623831.1">
    <property type="nucleotide sequence ID" value="NZ_JQAV01000016.1"/>
</dbReference>
<dbReference type="SMR" id="Q1G7S5"/>
<dbReference type="STRING" id="390333.Ldb0141"/>
<dbReference type="KEGG" id="ldb:Ldb0141"/>
<dbReference type="PATRIC" id="fig|390333.13.peg.781"/>
<dbReference type="eggNOG" id="COG1576">
    <property type="taxonomic scope" value="Bacteria"/>
</dbReference>
<dbReference type="HOGENOM" id="CLU_100552_0_0_9"/>
<dbReference type="BioCyc" id="LDEL390333:LDB_RS00575-MONOMER"/>
<dbReference type="Proteomes" id="UP000001259">
    <property type="component" value="Chromosome"/>
</dbReference>
<dbReference type="GO" id="GO:0005737">
    <property type="term" value="C:cytoplasm"/>
    <property type="evidence" value="ECO:0007669"/>
    <property type="project" value="UniProtKB-SubCell"/>
</dbReference>
<dbReference type="GO" id="GO:0070038">
    <property type="term" value="F:rRNA (pseudouridine-N3-)-methyltransferase activity"/>
    <property type="evidence" value="ECO:0007669"/>
    <property type="project" value="UniProtKB-UniRule"/>
</dbReference>
<dbReference type="CDD" id="cd18081">
    <property type="entry name" value="RlmH-like"/>
    <property type="match status" value="1"/>
</dbReference>
<dbReference type="Gene3D" id="3.40.1280.10">
    <property type="match status" value="1"/>
</dbReference>
<dbReference type="HAMAP" id="MF_00658">
    <property type="entry name" value="23SrRNA_methyltr_H"/>
    <property type="match status" value="1"/>
</dbReference>
<dbReference type="InterPro" id="IPR029028">
    <property type="entry name" value="Alpha/beta_knot_MTases"/>
</dbReference>
<dbReference type="InterPro" id="IPR003742">
    <property type="entry name" value="RlmH-like"/>
</dbReference>
<dbReference type="InterPro" id="IPR029026">
    <property type="entry name" value="tRNA_m1G_MTases_N"/>
</dbReference>
<dbReference type="NCBIfam" id="NF000985">
    <property type="entry name" value="PRK00103.1-3"/>
    <property type="match status" value="1"/>
</dbReference>
<dbReference type="NCBIfam" id="TIGR00246">
    <property type="entry name" value="tRNA_RlmH_YbeA"/>
    <property type="match status" value="1"/>
</dbReference>
<dbReference type="PANTHER" id="PTHR33603">
    <property type="entry name" value="METHYLTRANSFERASE"/>
    <property type="match status" value="1"/>
</dbReference>
<dbReference type="PANTHER" id="PTHR33603:SF1">
    <property type="entry name" value="RIBOSOMAL RNA LARGE SUBUNIT METHYLTRANSFERASE H"/>
    <property type="match status" value="1"/>
</dbReference>
<dbReference type="Pfam" id="PF02590">
    <property type="entry name" value="SPOUT_MTase"/>
    <property type="match status" value="1"/>
</dbReference>
<dbReference type="PIRSF" id="PIRSF004505">
    <property type="entry name" value="MT_bac"/>
    <property type="match status" value="1"/>
</dbReference>
<dbReference type="SUPFAM" id="SSF75217">
    <property type="entry name" value="alpha/beta knot"/>
    <property type="match status" value="1"/>
</dbReference>
<protein>
    <recommendedName>
        <fullName evidence="1">Ribosomal RNA large subunit methyltransferase H</fullName>
        <ecNumber evidence="1">2.1.1.177</ecNumber>
    </recommendedName>
    <alternativeName>
        <fullName evidence="1">23S rRNA (pseudouridine1915-N3)-methyltransferase</fullName>
    </alternativeName>
    <alternativeName>
        <fullName evidence="1">23S rRNA m3Psi1915 methyltransferase</fullName>
    </alternativeName>
    <alternativeName>
        <fullName evidence="1">rRNA (pseudouridine-N3-)-methyltransferase RlmH</fullName>
    </alternativeName>
</protein>
<proteinExistence type="inferred from homology"/>
<keyword id="KW-0963">Cytoplasm</keyword>
<keyword id="KW-0489">Methyltransferase</keyword>
<keyword id="KW-1185">Reference proteome</keyword>
<keyword id="KW-0698">rRNA processing</keyword>
<keyword id="KW-0949">S-adenosyl-L-methionine</keyword>
<keyword id="KW-0808">Transferase</keyword>
<accession>Q1G7S5</accession>
<reference key="1">
    <citation type="journal article" date="2006" name="Proc. Natl. Acad. Sci. U.S.A.">
        <title>The complete genome sequence of Lactobacillus bulgaricus reveals extensive and ongoing reductive evolution.</title>
        <authorList>
            <person name="van de Guchte M."/>
            <person name="Penaud S."/>
            <person name="Grimaldi C."/>
            <person name="Barbe V."/>
            <person name="Bryson K."/>
            <person name="Nicolas P."/>
            <person name="Robert C."/>
            <person name="Oztas S."/>
            <person name="Mangenot S."/>
            <person name="Couloux A."/>
            <person name="Loux V."/>
            <person name="Dervyn R."/>
            <person name="Bossy R."/>
            <person name="Bolotin A."/>
            <person name="Batto J.-M."/>
            <person name="Walunas T."/>
            <person name="Gibrat J.-F."/>
            <person name="Bessieres P."/>
            <person name="Weissenbach J."/>
            <person name="Ehrlich S.D."/>
            <person name="Maguin E."/>
        </authorList>
    </citation>
    <scope>NUCLEOTIDE SEQUENCE [LARGE SCALE GENOMIC DNA]</scope>
    <source>
        <strain>ATCC 11842 / DSM 20081 / BCRC 10696 / JCM 1002 / NBRC 13953 / NCIMB 11778 / NCTC 12712 / WDCM 00102 / Lb 14</strain>
    </source>
</reference>